<dbReference type="EC" id="2.3.2.27" evidence="6"/>
<dbReference type="EMBL" id="BC109497">
    <property type="protein sequence ID" value="AAI09498.1"/>
    <property type="molecule type" value="mRNA"/>
</dbReference>
<dbReference type="RefSeq" id="NP_001033263.1">
    <property type="nucleotide sequence ID" value="NM_001038174.2"/>
</dbReference>
<dbReference type="RefSeq" id="XP_015315540.1">
    <property type="nucleotide sequence ID" value="XM_015460054.1"/>
</dbReference>
<dbReference type="SMR" id="Q32LN5"/>
<dbReference type="FunCoup" id="Q32LN5">
    <property type="interactions" value="1412"/>
</dbReference>
<dbReference type="STRING" id="9913.ENSBTAP00000026851"/>
<dbReference type="PaxDb" id="9913-ENSBTAP00000026851"/>
<dbReference type="GeneID" id="538445"/>
<dbReference type="KEGG" id="bta:538445"/>
<dbReference type="CTD" id="51444"/>
<dbReference type="VEuPathDB" id="HostDB:ENSBTAG00000020160"/>
<dbReference type="eggNOG" id="ENOG502RP2G">
    <property type="taxonomic scope" value="Eukaryota"/>
</dbReference>
<dbReference type="HOGENOM" id="CLU_092448_0_0_1"/>
<dbReference type="InParanoid" id="Q32LN5"/>
<dbReference type="OMA" id="CFNEEDF"/>
<dbReference type="OrthoDB" id="7873042at2759"/>
<dbReference type="TreeFam" id="TF331012"/>
<dbReference type="Reactome" id="R-BTA-983168">
    <property type="pathway name" value="Antigen processing: Ubiquitination &amp; Proteasome degradation"/>
</dbReference>
<dbReference type="UniPathway" id="UPA00143"/>
<dbReference type="Proteomes" id="UP000009136">
    <property type="component" value="Chromosome 24"/>
</dbReference>
<dbReference type="Bgee" id="ENSBTAG00000020160">
    <property type="expression patterns" value="Expressed in semen and 106 other cell types or tissues"/>
</dbReference>
<dbReference type="GO" id="GO:0035861">
    <property type="term" value="C:site of double-strand break"/>
    <property type="evidence" value="ECO:0000250"/>
    <property type="project" value="UniProtKB"/>
</dbReference>
<dbReference type="GO" id="GO:0003697">
    <property type="term" value="F:single-stranded DNA binding"/>
    <property type="evidence" value="ECO:0000250"/>
    <property type="project" value="UniProtKB"/>
</dbReference>
<dbReference type="GO" id="GO:0061630">
    <property type="term" value="F:ubiquitin protein ligase activity"/>
    <property type="evidence" value="ECO:0000250"/>
    <property type="project" value="UniProtKB"/>
</dbReference>
<dbReference type="GO" id="GO:0008270">
    <property type="term" value="F:zinc ion binding"/>
    <property type="evidence" value="ECO:0007669"/>
    <property type="project" value="UniProtKB-KW"/>
</dbReference>
<dbReference type="GO" id="GO:0010792">
    <property type="term" value="P:DNA double-strand break processing involved in repair via single-strand annealing"/>
    <property type="evidence" value="ECO:0000250"/>
    <property type="project" value="UniProtKB"/>
</dbReference>
<dbReference type="GO" id="GO:0000724">
    <property type="term" value="P:double-strand break repair via homologous recombination"/>
    <property type="evidence" value="ECO:0000250"/>
    <property type="project" value="UniProtKB"/>
</dbReference>
<dbReference type="GO" id="GO:0016567">
    <property type="term" value="P:protein ubiquitination"/>
    <property type="evidence" value="ECO:0000250"/>
    <property type="project" value="UniProtKB"/>
</dbReference>
<dbReference type="GO" id="GO:0016055">
    <property type="term" value="P:Wnt signaling pathway"/>
    <property type="evidence" value="ECO:0007669"/>
    <property type="project" value="UniProtKB-KW"/>
</dbReference>
<dbReference type="CDD" id="cd16544">
    <property type="entry name" value="RING-HC_RNF138"/>
    <property type="match status" value="1"/>
</dbReference>
<dbReference type="FunFam" id="3.30.40.10:FF:000267">
    <property type="entry name" value="E3 ubiquitin-protein ligase RNF138 isoform X1"/>
    <property type="match status" value="1"/>
</dbReference>
<dbReference type="Gene3D" id="3.30.40.10">
    <property type="entry name" value="Zinc/RING finger domain, C3HC4 (zinc finger)"/>
    <property type="match status" value="1"/>
</dbReference>
<dbReference type="InterPro" id="IPR008598">
    <property type="entry name" value="Di19_Zn-bd"/>
</dbReference>
<dbReference type="InterPro" id="IPR052498">
    <property type="entry name" value="E3_ubiq-protein_ligase_RNF138"/>
</dbReference>
<dbReference type="InterPro" id="IPR034734">
    <property type="entry name" value="ZF_C2HC_RNF"/>
</dbReference>
<dbReference type="InterPro" id="IPR001841">
    <property type="entry name" value="Znf_RING"/>
</dbReference>
<dbReference type="InterPro" id="IPR013083">
    <property type="entry name" value="Znf_RING/FYVE/PHD"/>
</dbReference>
<dbReference type="PANTHER" id="PTHR46968">
    <property type="entry name" value="E3 UBIQUITIN-PROTEIN LIGASE RNF138"/>
    <property type="match status" value="1"/>
</dbReference>
<dbReference type="PANTHER" id="PTHR46968:SF2">
    <property type="entry name" value="E3 UBIQUITIN-PROTEIN LIGASE RNF138"/>
    <property type="match status" value="1"/>
</dbReference>
<dbReference type="Pfam" id="PF13923">
    <property type="entry name" value="zf-C3HC4_2"/>
    <property type="match status" value="1"/>
</dbReference>
<dbReference type="Pfam" id="PF05605">
    <property type="entry name" value="zf-Di19"/>
    <property type="match status" value="1"/>
</dbReference>
<dbReference type="Pfam" id="PF18574">
    <property type="entry name" value="zf_C2HC_14"/>
    <property type="match status" value="1"/>
</dbReference>
<dbReference type="SMART" id="SM00184">
    <property type="entry name" value="RING"/>
    <property type="match status" value="2"/>
</dbReference>
<dbReference type="SUPFAM" id="SSF57850">
    <property type="entry name" value="RING/U-box"/>
    <property type="match status" value="1"/>
</dbReference>
<dbReference type="PROSITE" id="PS51803">
    <property type="entry name" value="ZF_C2HC_RNF"/>
    <property type="match status" value="1"/>
</dbReference>
<dbReference type="PROSITE" id="PS50089">
    <property type="entry name" value="ZF_RING_2"/>
    <property type="match status" value="1"/>
</dbReference>
<proteinExistence type="evidence at transcript level"/>
<accession>Q32LN5</accession>
<reference key="1">
    <citation type="submission" date="2005-11" db="EMBL/GenBank/DDBJ databases">
        <authorList>
            <consortium name="NIH - Mammalian Gene Collection (MGC) project"/>
        </authorList>
    </citation>
    <scope>NUCLEOTIDE SEQUENCE [LARGE SCALE MRNA]</scope>
    <source>
        <strain>Crossbred X Angus</strain>
        <tissue>Liver</tissue>
    </source>
</reference>
<gene>
    <name type="primary">RNF138</name>
</gene>
<comment type="function">
    <text evidence="1">E3 ubiquitin-protein ligase involved in DNA damage response by promoting DNA resection and homologous recombination. Recruited to sites of double-strand breaks following DNA damage and specifically promotes double-strand break repair via homologous recombination. Two different, non-exclusive, mechanisms have been proposed. According to a report, regulates the choice of double-strand break repair by favoring homologous recombination over non-homologous end joining (NHEJ): acts by mediating ubiquitination of XRCC5/Ku80, leading to remove the Ku complex from DNA breaks, thereby promoting homologous recombination. According to another report, cooperates with UBE2Ds E2 ubiquitin ligases (UBE2D1, UBE2D2, UBE2D3 or UBE2D4) to promote homologous recombination by mediating ubiquitination of RBBP8/CtIP. Together with NLK, involved in the ubiquitination and degradation of TCF/LEF. Also exhibits auto-ubiquitination activity in combination with UBE2K. May act as a negative regulator in the Wnt/beta-catenin-mediated signaling pathway.</text>
</comment>
<comment type="catalytic activity">
    <reaction evidence="6">
        <text>S-ubiquitinyl-[E2 ubiquitin-conjugating enzyme]-L-cysteine + [acceptor protein]-L-lysine = [E2 ubiquitin-conjugating enzyme]-L-cysteine + N(6)-ubiquitinyl-[acceptor protein]-L-lysine.</text>
        <dbReference type="EC" id="2.3.2.27"/>
    </reaction>
</comment>
<comment type="pathway">
    <text evidence="1">Protein modification; protein ubiquitination.</text>
</comment>
<comment type="subunit">
    <text evidence="1">Interacts with NLK. Interacts with XRCC5/Ku80. Interacts with RBBP8/CtIP.</text>
</comment>
<comment type="subcellular location">
    <subcellularLocation>
        <location evidence="1">Chromosome</location>
    </subcellularLocation>
    <text evidence="1">Recruited at DNA damage sites. Localizes to sites of double-strand break: localization to double-strand break sites is mediated by the zinc fingers.</text>
</comment>
<comment type="domain">
    <text evidence="1">The zinc finger domains (C2H2-type and C2HC-type zinc fingers) bind DNA and mediate recruitment to double-strand break sites. They show strong preference for DNA with 5'- or 3'-single-stranded overhangs, while they do not bind blunt-ended double-stranded DNA or poly(ADP-ribose) (PAR) polymers.</text>
</comment>
<comment type="PTM">
    <text evidence="1">Auto-ubiquitinated.</text>
</comment>
<sequence length="245" mass="28157">MAEELSAATSYTEDDFYCPVCQEVLKTPVRTAACQHVFCRKCFLTAMRESGIHCPLCRGNVTRRERACPERALDLENIMRKFSGSCRCCAKQIKFYRMRHHYKSCKKYQDEYGVSSIIPNFQISQDSVGNSNRSETSASDNIETYQENTGSSGHPTFKCPLCQESNFTRQRLLDHCNSNHLFQIVPVTCPICVSLPWGDPSQVTRNFVSHLNQRHQFDYGEFVNLQLDEETQYQTAVEESFQVNI</sequence>
<organism>
    <name type="scientific">Bos taurus</name>
    <name type="common">Bovine</name>
    <dbReference type="NCBI Taxonomy" id="9913"/>
    <lineage>
        <taxon>Eukaryota</taxon>
        <taxon>Metazoa</taxon>
        <taxon>Chordata</taxon>
        <taxon>Craniata</taxon>
        <taxon>Vertebrata</taxon>
        <taxon>Euteleostomi</taxon>
        <taxon>Mammalia</taxon>
        <taxon>Eutheria</taxon>
        <taxon>Laurasiatheria</taxon>
        <taxon>Artiodactyla</taxon>
        <taxon>Ruminantia</taxon>
        <taxon>Pecora</taxon>
        <taxon>Bovidae</taxon>
        <taxon>Bovinae</taxon>
        <taxon>Bos</taxon>
    </lineage>
</organism>
<name>RN138_BOVIN</name>
<feature type="initiator methionine" description="Removed" evidence="1">
    <location>
        <position position="1"/>
    </location>
</feature>
<feature type="chain" id="PRO_0000261606" description="E3 ubiquitin-protein ligase RNF138">
    <location>
        <begin position="2"/>
        <end position="245"/>
    </location>
</feature>
<feature type="domain" description="UIM" evidence="1">
    <location>
        <begin position="225"/>
        <end position="243"/>
    </location>
</feature>
<feature type="zinc finger region" description="RING-type" evidence="3">
    <location>
        <begin position="18"/>
        <end position="58"/>
    </location>
</feature>
<feature type="zinc finger region" description="C2HC RNF-type" evidence="4">
    <location>
        <begin position="86"/>
        <end position="105"/>
    </location>
</feature>
<feature type="zinc finger region" description="C2H2-type 1" evidence="2">
    <location>
        <begin position="157"/>
        <end position="180"/>
    </location>
</feature>
<feature type="zinc finger region" description="C2H2-type 2" evidence="1">
    <location>
        <begin position="187"/>
        <end position="215"/>
    </location>
</feature>
<feature type="region of interest" description="Disordered" evidence="5">
    <location>
        <begin position="128"/>
        <end position="153"/>
    </location>
</feature>
<feature type="binding site" evidence="4">
    <location>
        <position position="86"/>
    </location>
    <ligand>
        <name>Zn(2+)</name>
        <dbReference type="ChEBI" id="CHEBI:29105"/>
    </ligand>
</feature>
<feature type="binding site" evidence="4">
    <location>
        <position position="89"/>
    </location>
    <ligand>
        <name>Zn(2+)</name>
        <dbReference type="ChEBI" id="CHEBI:29105"/>
    </ligand>
</feature>
<feature type="binding site" evidence="4">
    <location>
        <position position="101"/>
    </location>
    <ligand>
        <name>Zn(2+)</name>
        <dbReference type="ChEBI" id="CHEBI:29105"/>
    </ligand>
</feature>
<feature type="binding site" evidence="4">
    <location>
        <position position="105"/>
    </location>
    <ligand>
        <name>Zn(2+)</name>
        <dbReference type="ChEBI" id="CHEBI:29105"/>
    </ligand>
</feature>
<feature type="modified residue" description="N-acetylalanine" evidence="1">
    <location>
        <position position="2"/>
    </location>
</feature>
<evidence type="ECO:0000250" key="1">
    <source>
        <dbReference type="UniProtKB" id="Q8WVD3"/>
    </source>
</evidence>
<evidence type="ECO:0000255" key="2">
    <source>
        <dbReference type="PROSITE-ProRule" id="PRU00042"/>
    </source>
</evidence>
<evidence type="ECO:0000255" key="3">
    <source>
        <dbReference type="PROSITE-ProRule" id="PRU00175"/>
    </source>
</evidence>
<evidence type="ECO:0000255" key="4">
    <source>
        <dbReference type="PROSITE-ProRule" id="PRU01144"/>
    </source>
</evidence>
<evidence type="ECO:0000256" key="5">
    <source>
        <dbReference type="SAM" id="MobiDB-lite"/>
    </source>
</evidence>
<evidence type="ECO:0000305" key="6"/>
<protein>
    <recommendedName>
        <fullName>E3 ubiquitin-protein ligase RNF138</fullName>
        <ecNumber evidence="6">2.3.2.27</ecNumber>
    </recommendedName>
    <alternativeName>
        <fullName>RING finger protein 138</fullName>
    </alternativeName>
    <alternativeName>
        <fullName evidence="6">RING-type E3 ubiquitin transferase RNF138</fullName>
    </alternativeName>
</protein>
<keyword id="KW-0007">Acetylation</keyword>
<keyword id="KW-0158">Chromosome</keyword>
<keyword id="KW-0227">DNA damage</keyword>
<keyword id="KW-0234">DNA repair</keyword>
<keyword id="KW-0238">DNA-binding</keyword>
<keyword id="KW-0479">Metal-binding</keyword>
<keyword id="KW-1185">Reference proteome</keyword>
<keyword id="KW-0677">Repeat</keyword>
<keyword id="KW-0808">Transferase</keyword>
<keyword id="KW-0832">Ubl conjugation</keyword>
<keyword id="KW-0833">Ubl conjugation pathway</keyword>
<keyword id="KW-0879">Wnt signaling pathway</keyword>
<keyword id="KW-0862">Zinc</keyword>
<keyword id="KW-0863">Zinc-finger</keyword>